<name>FRDD_HAEI8</name>
<evidence type="ECO:0000255" key="1">
    <source>
        <dbReference type="HAMAP-Rule" id="MF_00709"/>
    </source>
</evidence>
<organism>
    <name type="scientific">Haemophilus influenzae (strain 86-028NP)</name>
    <dbReference type="NCBI Taxonomy" id="281310"/>
    <lineage>
        <taxon>Bacteria</taxon>
        <taxon>Pseudomonadati</taxon>
        <taxon>Pseudomonadota</taxon>
        <taxon>Gammaproteobacteria</taxon>
        <taxon>Pasteurellales</taxon>
        <taxon>Pasteurellaceae</taxon>
        <taxon>Haemophilus</taxon>
    </lineage>
</organism>
<sequence length="114" mass="12608">MVDQNPKRSGEPPVWLMFGAGGTVSAIFLPVVILIIGLLLPFGLVDAHNLITFAYSWIGKLVILVLTIFPMWCGLHRIHHGMHDLKVHVPAGGFIFYGLATIYTVWVLFAVINL</sequence>
<accession>Q4QM68</accession>
<proteinExistence type="inferred from homology"/>
<dbReference type="EMBL" id="CP000057">
    <property type="protein sequence ID" value="AAX87879.1"/>
    <property type="molecule type" value="Genomic_DNA"/>
</dbReference>
<dbReference type="RefSeq" id="WP_005690445.1">
    <property type="nucleotide sequence ID" value="NC_007146.2"/>
</dbReference>
<dbReference type="SMR" id="Q4QM68"/>
<dbReference type="KEGG" id="hit:NTHI0998"/>
<dbReference type="HOGENOM" id="CLU_168367_0_0_6"/>
<dbReference type="Proteomes" id="UP000002525">
    <property type="component" value="Chromosome"/>
</dbReference>
<dbReference type="GO" id="GO:0045283">
    <property type="term" value="C:fumarate reductase complex"/>
    <property type="evidence" value="ECO:0007669"/>
    <property type="project" value="UniProtKB-UniRule"/>
</dbReference>
<dbReference type="GO" id="GO:0005886">
    <property type="term" value="C:plasma membrane"/>
    <property type="evidence" value="ECO:0007669"/>
    <property type="project" value="UniProtKB-SubCell"/>
</dbReference>
<dbReference type="GO" id="GO:0000104">
    <property type="term" value="F:succinate dehydrogenase activity"/>
    <property type="evidence" value="ECO:0007669"/>
    <property type="project" value="UniProtKB-UniRule"/>
</dbReference>
<dbReference type="GO" id="GO:0006106">
    <property type="term" value="P:fumarate metabolic process"/>
    <property type="evidence" value="ECO:0007669"/>
    <property type="project" value="InterPro"/>
</dbReference>
<dbReference type="CDD" id="cd00547">
    <property type="entry name" value="QFR_TypeD_subunitD"/>
    <property type="match status" value="1"/>
</dbReference>
<dbReference type="Gene3D" id="1.20.1300.10">
    <property type="entry name" value="Fumarate reductase/succinate dehydrogenase, transmembrane subunit"/>
    <property type="match status" value="1"/>
</dbReference>
<dbReference type="HAMAP" id="MF_00709">
    <property type="entry name" value="Fumarate_red_D"/>
    <property type="match status" value="1"/>
</dbReference>
<dbReference type="InterPro" id="IPR003418">
    <property type="entry name" value="Fumarate_red_D"/>
</dbReference>
<dbReference type="InterPro" id="IPR034804">
    <property type="entry name" value="SQR/QFR_C/D"/>
</dbReference>
<dbReference type="NCBIfam" id="NF003977">
    <property type="entry name" value="PRK05470.1-1"/>
    <property type="match status" value="1"/>
</dbReference>
<dbReference type="Pfam" id="PF02313">
    <property type="entry name" value="Fumarate_red_D"/>
    <property type="match status" value="1"/>
</dbReference>
<dbReference type="PIRSF" id="PIRSF000179">
    <property type="entry name" value="FrdD"/>
    <property type="match status" value="1"/>
</dbReference>
<dbReference type="SUPFAM" id="SSF81343">
    <property type="entry name" value="Fumarate reductase respiratory complex transmembrane subunits"/>
    <property type="match status" value="1"/>
</dbReference>
<protein>
    <recommendedName>
        <fullName evidence="1">Fumarate reductase subunit D</fullName>
    </recommendedName>
    <alternativeName>
        <fullName evidence="1">Quinol-fumarate reductase subunit D</fullName>
        <shortName evidence="1">QFR subunit D</shortName>
    </alternativeName>
</protein>
<comment type="function">
    <text evidence="1">Anchors the catalytic components of the fumarate reductase complex to the cell membrane, binds quinones.</text>
</comment>
<comment type="subunit">
    <text evidence="1">Part of an enzyme complex containing four subunits: a flavoprotein (FrdA), an iron-sulfur protein (FrdB), and two hydrophobic anchor proteins (FrdC and FrdD).</text>
</comment>
<comment type="subcellular location">
    <subcellularLocation>
        <location evidence="1">Cell inner membrane</location>
        <topology evidence="1">Multi-pass membrane protein</topology>
    </subcellularLocation>
</comment>
<comment type="similarity">
    <text evidence="1">Belongs to the FrdD family.</text>
</comment>
<gene>
    <name evidence="1" type="primary">frdD</name>
    <name type="ordered locus">NTHI0998</name>
</gene>
<feature type="chain" id="PRO_1000045550" description="Fumarate reductase subunit D">
    <location>
        <begin position="1"/>
        <end position="114"/>
    </location>
</feature>
<feature type="transmembrane region" description="Helical" evidence="1">
    <location>
        <begin position="24"/>
        <end position="44"/>
    </location>
</feature>
<feature type="transmembrane region" description="Helical" evidence="1">
    <location>
        <begin position="50"/>
        <end position="70"/>
    </location>
</feature>
<feature type="transmembrane region" description="Helical" evidence="1">
    <location>
        <begin position="92"/>
        <end position="112"/>
    </location>
</feature>
<keyword id="KW-0997">Cell inner membrane</keyword>
<keyword id="KW-1003">Cell membrane</keyword>
<keyword id="KW-0472">Membrane</keyword>
<keyword id="KW-0812">Transmembrane</keyword>
<keyword id="KW-1133">Transmembrane helix</keyword>
<reference key="1">
    <citation type="journal article" date="2005" name="J. Bacteriol.">
        <title>Genomic sequence of an otitis media isolate of nontypeable Haemophilus influenzae: comparative study with H. influenzae serotype d, strain KW20.</title>
        <authorList>
            <person name="Harrison A."/>
            <person name="Dyer D.W."/>
            <person name="Gillaspy A."/>
            <person name="Ray W.C."/>
            <person name="Mungur R."/>
            <person name="Carson M.B."/>
            <person name="Zhong H."/>
            <person name="Gipson J."/>
            <person name="Gipson M."/>
            <person name="Johnson L.S."/>
            <person name="Lewis L."/>
            <person name="Bakaletz L.O."/>
            <person name="Munson R.S. Jr."/>
        </authorList>
    </citation>
    <scope>NUCLEOTIDE SEQUENCE [LARGE SCALE GENOMIC DNA]</scope>
    <source>
        <strain>86-028NP</strain>
    </source>
</reference>